<dbReference type="EC" id="2.3.1.225" evidence="1"/>
<dbReference type="EMBL" id="AE016816">
    <property type="protein sequence ID" value="AAS51225.2"/>
    <property type="molecule type" value="Genomic_DNA"/>
</dbReference>
<dbReference type="RefSeq" id="NP_983401.2">
    <property type="nucleotide sequence ID" value="NM_208754.2"/>
</dbReference>
<dbReference type="SMR" id="Q75CB4"/>
<dbReference type="FunCoup" id="Q75CB4">
    <property type="interactions" value="33"/>
</dbReference>
<dbReference type="STRING" id="284811.Q75CB4"/>
<dbReference type="EnsemblFungi" id="AAS51225">
    <property type="protein sequence ID" value="AAS51225"/>
    <property type="gene ID" value="AGOS_ACL003C"/>
</dbReference>
<dbReference type="GeneID" id="4619526"/>
<dbReference type="KEGG" id="ago:AGOS_ACL003C"/>
<dbReference type="eggNOG" id="KOG1314">
    <property type="taxonomic scope" value="Eukaryota"/>
</dbReference>
<dbReference type="HOGENOM" id="CLU_027721_8_0_1"/>
<dbReference type="InParanoid" id="Q75CB4"/>
<dbReference type="OMA" id="TMNCVGY"/>
<dbReference type="OrthoDB" id="331948at2759"/>
<dbReference type="Proteomes" id="UP000000591">
    <property type="component" value="Chromosome III"/>
</dbReference>
<dbReference type="GO" id="GO:0005783">
    <property type="term" value="C:endoplasmic reticulum"/>
    <property type="evidence" value="ECO:0000318"/>
    <property type="project" value="GO_Central"/>
</dbReference>
<dbReference type="GO" id="GO:0005789">
    <property type="term" value="C:endoplasmic reticulum membrane"/>
    <property type="evidence" value="ECO:0007669"/>
    <property type="project" value="UniProtKB-SubCell"/>
</dbReference>
<dbReference type="GO" id="GO:0005794">
    <property type="term" value="C:Golgi apparatus"/>
    <property type="evidence" value="ECO:0000318"/>
    <property type="project" value="GO_Central"/>
</dbReference>
<dbReference type="GO" id="GO:0019706">
    <property type="term" value="F:protein-cysteine S-palmitoyltransferase activity"/>
    <property type="evidence" value="ECO:0000318"/>
    <property type="project" value="GO_Central"/>
</dbReference>
<dbReference type="GO" id="GO:0006612">
    <property type="term" value="P:protein targeting to membrane"/>
    <property type="evidence" value="ECO:0000318"/>
    <property type="project" value="GO_Central"/>
</dbReference>
<dbReference type="HAMAP" id="MF_03199">
    <property type="entry name" value="DHHC_PAT_PFA4"/>
    <property type="match status" value="1"/>
</dbReference>
<dbReference type="InterPro" id="IPR001594">
    <property type="entry name" value="Palmitoyltrfase_DHHC"/>
</dbReference>
<dbReference type="InterPro" id="IPR033682">
    <property type="entry name" value="PFA4"/>
</dbReference>
<dbReference type="InterPro" id="IPR039859">
    <property type="entry name" value="PFA4/ZDH16/20/ERF2-like"/>
</dbReference>
<dbReference type="PANTHER" id="PTHR12246">
    <property type="entry name" value="PALMITOYLTRANSFERASE ZDHHC16"/>
    <property type="match status" value="1"/>
</dbReference>
<dbReference type="Pfam" id="PF01529">
    <property type="entry name" value="DHHC"/>
    <property type="match status" value="1"/>
</dbReference>
<dbReference type="PROSITE" id="PS50216">
    <property type="entry name" value="DHHC"/>
    <property type="match status" value="1"/>
</dbReference>
<name>PFA4_EREGS</name>
<sequence length="375" mass="44021">MAVLVKWPWLGVAIPCFLISFTGYFAHFFVLTNFLSFKELLWFQVSLSMIWISYWKAIYKNPGRPTKGFRPLRYEWQNYCTKCETYKPERTHHCKRCNQCVLVMDHHCPWTMNCVGYKNFPHFIRFLFWIIATTGILLHYFVKRIKFTWVNRYATANLVSKQELIFLTILTPLDAFILLTISLLFVRCVKNQIVNGRTQIEAWEMDRIENLFYHQRLLPQLLTNLKEIYPGSLEGQEKEVEEFLSSSTCSFDEVINFPYDINPWVNLLNCMGSPLNWLNPFGGPKADGMVFQKNEISDYDEATSIQDKLLALPWPPDDTRHGIAFPSVSHVEKDTQGGEQVVRRRHVPIAVPPRNEWYNDWGESLEHFGVDVEVE</sequence>
<gene>
    <name evidence="1" type="primary">PFA4</name>
    <name type="ordered locus">ACL003C</name>
</gene>
<accession>Q75CB4</accession>
<proteinExistence type="inferred from homology"/>
<protein>
    <recommendedName>
        <fullName evidence="1">Palmitoyltransferase PFA4</fullName>
        <ecNumber evidence="1">2.3.1.225</ecNumber>
    </recommendedName>
    <alternativeName>
        <fullName evidence="1">Protein S-acyltransferase</fullName>
        <shortName evidence="1">PAT</shortName>
    </alternativeName>
    <alternativeName>
        <fullName evidence="1">Protein fatty acyltransferase 4</fullName>
    </alternativeName>
</protein>
<feature type="chain" id="PRO_0000212960" description="Palmitoyltransferase PFA4">
    <location>
        <begin position="1"/>
        <end position="375"/>
    </location>
</feature>
<feature type="topological domain" description="Cytoplasmic" evidence="1">
    <location>
        <begin position="1"/>
        <end position="9"/>
    </location>
</feature>
<feature type="transmembrane region" description="Helical" evidence="1">
    <location>
        <begin position="10"/>
        <end position="30"/>
    </location>
</feature>
<feature type="topological domain" description="Lumenal" evidence="1">
    <location>
        <begin position="31"/>
        <end position="33"/>
    </location>
</feature>
<feature type="transmembrane region" description="Helical" evidence="1">
    <location>
        <begin position="34"/>
        <end position="54"/>
    </location>
</feature>
<feature type="topological domain" description="Cytoplasmic" evidence="1">
    <location>
        <begin position="55"/>
        <end position="121"/>
    </location>
</feature>
<feature type="transmembrane region" description="Helical" evidence="1">
    <location>
        <begin position="122"/>
        <end position="142"/>
    </location>
</feature>
<feature type="topological domain" description="Lumenal" evidence="1">
    <location>
        <begin position="143"/>
        <end position="164"/>
    </location>
</feature>
<feature type="transmembrane region" description="Helical" evidence="1">
    <location>
        <begin position="165"/>
        <end position="185"/>
    </location>
</feature>
<feature type="topological domain" description="Cytoplasmic" evidence="1">
    <location>
        <begin position="186"/>
        <end position="375"/>
    </location>
</feature>
<feature type="domain" description="DHHC" evidence="2">
    <location>
        <begin position="78"/>
        <end position="128"/>
    </location>
</feature>
<feature type="active site" description="S-palmitoyl cysteine intermediate" evidence="1">
    <location>
        <position position="108"/>
    </location>
</feature>
<organism>
    <name type="scientific">Eremothecium gossypii (strain ATCC 10895 / CBS 109.51 / FGSC 9923 / NRRL Y-1056)</name>
    <name type="common">Yeast</name>
    <name type="synonym">Ashbya gossypii</name>
    <dbReference type="NCBI Taxonomy" id="284811"/>
    <lineage>
        <taxon>Eukaryota</taxon>
        <taxon>Fungi</taxon>
        <taxon>Dikarya</taxon>
        <taxon>Ascomycota</taxon>
        <taxon>Saccharomycotina</taxon>
        <taxon>Saccharomycetes</taxon>
        <taxon>Saccharomycetales</taxon>
        <taxon>Saccharomycetaceae</taxon>
        <taxon>Eremothecium</taxon>
    </lineage>
</organism>
<keyword id="KW-0012">Acyltransferase</keyword>
<keyword id="KW-0256">Endoplasmic reticulum</keyword>
<keyword id="KW-0449">Lipoprotein</keyword>
<keyword id="KW-0472">Membrane</keyword>
<keyword id="KW-0564">Palmitate</keyword>
<keyword id="KW-1185">Reference proteome</keyword>
<keyword id="KW-0808">Transferase</keyword>
<keyword id="KW-0812">Transmembrane</keyword>
<keyword id="KW-1133">Transmembrane helix</keyword>
<evidence type="ECO:0000255" key="1">
    <source>
        <dbReference type="HAMAP-Rule" id="MF_03199"/>
    </source>
</evidence>
<evidence type="ECO:0000255" key="2">
    <source>
        <dbReference type="PROSITE-ProRule" id="PRU00067"/>
    </source>
</evidence>
<comment type="function">
    <text evidence="1">Mediates the reversible addition of palmitate to target proteins, thereby regulating their membrane association and biological function.</text>
</comment>
<comment type="catalytic activity">
    <reaction evidence="1">
        <text>L-cysteinyl-[protein] + hexadecanoyl-CoA = S-hexadecanoyl-L-cysteinyl-[protein] + CoA</text>
        <dbReference type="Rhea" id="RHEA:36683"/>
        <dbReference type="Rhea" id="RHEA-COMP:10131"/>
        <dbReference type="Rhea" id="RHEA-COMP:11032"/>
        <dbReference type="ChEBI" id="CHEBI:29950"/>
        <dbReference type="ChEBI" id="CHEBI:57287"/>
        <dbReference type="ChEBI" id="CHEBI:57379"/>
        <dbReference type="ChEBI" id="CHEBI:74151"/>
        <dbReference type="EC" id="2.3.1.225"/>
    </reaction>
</comment>
<comment type="subcellular location">
    <subcellularLocation>
        <location evidence="1">Endoplasmic reticulum membrane</location>
        <topology evidence="1">Multi-pass membrane protein</topology>
    </subcellularLocation>
</comment>
<comment type="domain">
    <text evidence="1">The DHHC domain is required for palmitoyltransferase activity.</text>
</comment>
<comment type="similarity">
    <text evidence="1">Belongs to the DHHC palmitoyltransferase family. PFA4 subfamily.</text>
</comment>
<reference key="1">
    <citation type="journal article" date="2004" name="Science">
        <title>The Ashbya gossypii genome as a tool for mapping the ancient Saccharomyces cerevisiae genome.</title>
        <authorList>
            <person name="Dietrich F.S."/>
            <person name="Voegeli S."/>
            <person name="Brachat S."/>
            <person name="Lerch A."/>
            <person name="Gates K."/>
            <person name="Steiner S."/>
            <person name="Mohr C."/>
            <person name="Poehlmann R."/>
            <person name="Luedi P."/>
            <person name="Choi S."/>
            <person name="Wing R.A."/>
            <person name="Flavier A."/>
            <person name="Gaffney T.D."/>
            <person name="Philippsen P."/>
        </authorList>
    </citation>
    <scope>NUCLEOTIDE SEQUENCE [LARGE SCALE GENOMIC DNA]</scope>
    <source>
        <strain>ATCC 10895 / CBS 109.51 / FGSC 9923 / NRRL Y-1056</strain>
    </source>
</reference>
<reference key="2">
    <citation type="journal article" date="2013" name="G3 (Bethesda)">
        <title>Genomes of Ashbya fungi isolated from insects reveal four mating-type loci, numerous translocations, lack of transposons, and distinct gene duplications.</title>
        <authorList>
            <person name="Dietrich F.S."/>
            <person name="Voegeli S."/>
            <person name="Kuo S."/>
            <person name="Philippsen P."/>
        </authorList>
    </citation>
    <scope>GENOME REANNOTATION</scope>
    <scope>SEQUENCE REVISION TO 115-128</scope>
    <source>
        <strain>ATCC 10895 / CBS 109.51 / FGSC 9923 / NRRL Y-1056</strain>
    </source>
</reference>